<accession>Q3J349</accession>
<evidence type="ECO:0000255" key="1">
    <source>
        <dbReference type="HAMAP-Rule" id="MF_01037"/>
    </source>
</evidence>
<name>TRMFO_CERS4</name>
<proteinExistence type="inferred from homology"/>
<gene>
    <name evidence="1" type="primary">trmFO</name>
    <name type="synonym">gid</name>
    <name type="ordered locus">RHOS4_12170</name>
    <name type="ORF">RSP_2629</name>
</gene>
<sequence length="444" mass="48412">MAESLHIVGAGMAGSEAAWQAAEMGVPVVLHEMRPKVGTFAHRTGQFAEMVCSNSFRSDDDERNAVGLLHWEMRAARGLIMEMAAAHRLPAGGALAVDRDPFAESVTGRLRAHPLISVVEEEVADLPSSGNWIVATGPLTSSALAESLRALTGAEALAFFDAIAPIVYAETIDMEVAWRQSRYDKGETEDERTAYINCPMNREQYEAFIDALLAAEKTEFHEGETAGYFDGCLPIEVMAERGRETLRHGPMKPVGLTNSHRPEEKAHAVVQLRRDNKLGTLYNIVGFQTKMKYGAQTAVFKMIPGLENASFARLGGIHRNTFLNSPTLLDDRMRLKLRPNIRFAGQVTGVEGYVESAAMGLLAGRMAAAEILGRDLPPPPPETAMGALVTHITGGAEAKSFQPMNVNFGLFPPIDARGGRRGRKDRYKAYTDRAKAAFTEWLGA</sequence>
<reference key="1">
    <citation type="submission" date="2005-09" db="EMBL/GenBank/DDBJ databases">
        <title>Complete sequence of chromosome 1 of Rhodobacter sphaeroides 2.4.1.</title>
        <authorList>
            <person name="Copeland A."/>
            <person name="Lucas S."/>
            <person name="Lapidus A."/>
            <person name="Barry K."/>
            <person name="Detter J.C."/>
            <person name="Glavina T."/>
            <person name="Hammon N."/>
            <person name="Israni S."/>
            <person name="Pitluck S."/>
            <person name="Richardson P."/>
            <person name="Mackenzie C."/>
            <person name="Choudhary M."/>
            <person name="Larimer F."/>
            <person name="Hauser L.J."/>
            <person name="Land M."/>
            <person name="Donohue T.J."/>
            <person name="Kaplan S."/>
        </authorList>
    </citation>
    <scope>NUCLEOTIDE SEQUENCE [LARGE SCALE GENOMIC DNA]</scope>
    <source>
        <strain>ATCC 17023 / DSM 158 / JCM 6121 / CCUG 31486 / LMG 2827 / NBRC 12203 / NCIMB 8253 / ATH 2.4.1.</strain>
    </source>
</reference>
<comment type="function">
    <text evidence="1">Catalyzes the folate-dependent formation of 5-methyl-uridine at position 54 (M-5-U54) in all tRNAs.</text>
</comment>
<comment type="catalytic activity">
    <reaction evidence="1">
        <text>uridine(54) in tRNA + (6R)-5,10-methylene-5,6,7,8-tetrahydrofolate + NADH + H(+) = 5-methyluridine(54) in tRNA + (6S)-5,6,7,8-tetrahydrofolate + NAD(+)</text>
        <dbReference type="Rhea" id="RHEA:16873"/>
        <dbReference type="Rhea" id="RHEA-COMP:10167"/>
        <dbReference type="Rhea" id="RHEA-COMP:10193"/>
        <dbReference type="ChEBI" id="CHEBI:15378"/>
        <dbReference type="ChEBI" id="CHEBI:15636"/>
        <dbReference type="ChEBI" id="CHEBI:57453"/>
        <dbReference type="ChEBI" id="CHEBI:57540"/>
        <dbReference type="ChEBI" id="CHEBI:57945"/>
        <dbReference type="ChEBI" id="CHEBI:65315"/>
        <dbReference type="ChEBI" id="CHEBI:74447"/>
        <dbReference type="EC" id="2.1.1.74"/>
    </reaction>
</comment>
<comment type="catalytic activity">
    <reaction evidence="1">
        <text>uridine(54) in tRNA + (6R)-5,10-methylene-5,6,7,8-tetrahydrofolate + NADPH + H(+) = 5-methyluridine(54) in tRNA + (6S)-5,6,7,8-tetrahydrofolate + NADP(+)</text>
        <dbReference type="Rhea" id="RHEA:62372"/>
        <dbReference type="Rhea" id="RHEA-COMP:10167"/>
        <dbReference type="Rhea" id="RHEA-COMP:10193"/>
        <dbReference type="ChEBI" id="CHEBI:15378"/>
        <dbReference type="ChEBI" id="CHEBI:15636"/>
        <dbReference type="ChEBI" id="CHEBI:57453"/>
        <dbReference type="ChEBI" id="CHEBI:57783"/>
        <dbReference type="ChEBI" id="CHEBI:58349"/>
        <dbReference type="ChEBI" id="CHEBI:65315"/>
        <dbReference type="ChEBI" id="CHEBI:74447"/>
        <dbReference type="EC" id="2.1.1.74"/>
    </reaction>
</comment>
<comment type="cofactor">
    <cofactor evidence="1">
        <name>FAD</name>
        <dbReference type="ChEBI" id="CHEBI:57692"/>
    </cofactor>
</comment>
<comment type="subcellular location">
    <subcellularLocation>
        <location evidence="1">Cytoplasm</location>
    </subcellularLocation>
</comment>
<comment type="similarity">
    <text evidence="1">Belongs to the MnmG family. TrmFO subfamily.</text>
</comment>
<organism>
    <name type="scientific">Cereibacter sphaeroides (strain ATCC 17023 / DSM 158 / JCM 6121 / CCUG 31486 / LMG 2827 / NBRC 12203 / NCIMB 8253 / ATH 2.4.1.)</name>
    <name type="common">Rhodobacter sphaeroides</name>
    <dbReference type="NCBI Taxonomy" id="272943"/>
    <lineage>
        <taxon>Bacteria</taxon>
        <taxon>Pseudomonadati</taxon>
        <taxon>Pseudomonadota</taxon>
        <taxon>Alphaproteobacteria</taxon>
        <taxon>Rhodobacterales</taxon>
        <taxon>Paracoccaceae</taxon>
        <taxon>Cereibacter</taxon>
    </lineage>
</organism>
<keyword id="KW-0963">Cytoplasm</keyword>
<keyword id="KW-0274">FAD</keyword>
<keyword id="KW-0285">Flavoprotein</keyword>
<keyword id="KW-0489">Methyltransferase</keyword>
<keyword id="KW-0520">NAD</keyword>
<keyword id="KW-0521">NADP</keyword>
<keyword id="KW-1185">Reference proteome</keyword>
<keyword id="KW-0808">Transferase</keyword>
<keyword id="KW-0819">tRNA processing</keyword>
<feature type="chain" id="PRO_1000063926" description="Methylenetetrahydrofolate--tRNA-(uracil-5-)-methyltransferase TrmFO">
    <location>
        <begin position="1"/>
        <end position="444"/>
    </location>
</feature>
<feature type="binding site" evidence="1">
    <location>
        <begin position="9"/>
        <end position="14"/>
    </location>
    <ligand>
        <name>FAD</name>
        <dbReference type="ChEBI" id="CHEBI:57692"/>
    </ligand>
</feature>
<protein>
    <recommendedName>
        <fullName evidence="1">Methylenetetrahydrofolate--tRNA-(uracil-5-)-methyltransferase TrmFO</fullName>
        <ecNumber evidence="1">2.1.1.74</ecNumber>
    </recommendedName>
    <alternativeName>
        <fullName evidence="1">Folate-dependent tRNA (uracil-5-)-methyltransferase</fullName>
    </alternativeName>
    <alternativeName>
        <fullName evidence="1">Folate-dependent tRNA(M-5-U54)-methyltransferase</fullName>
    </alternativeName>
</protein>
<dbReference type="EC" id="2.1.1.74" evidence="1"/>
<dbReference type="EMBL" id="CP000143">
    <property type="protein sequence ID" value="ABA78785.1"/>
    <property type="molecule type" value="Genomic_DNA"/>
</dbReference>
<dbReference type="RefSeq" id="WP_011337618.1">
    <property type="nucleotide sequence ID" value="NC_007493.2"/>
</dbReference>
<dbReference type="RefSeq" id="YP_352686.1">
    <property type="nucleotide sequence ID" value="NC_007493.2"/>
</dbReference>
<dbReference type="SMR" id="Q3J349"/>
<dbReference type="STRING" id="272943.RSP_2629"/>
<dbReference type="EnsemblBacteria" id="ABA78785">
    <property type="protein sequence ID" value="ABA78785"/>
    <property type="gene ID" value="RSP_2629"/>
</dbReference>
<dbReference type="GeneID" id="3720301"/>
<dbReference type="KEGG" id="rsp:RSP_2629"/>
<dbReference type="PATRIC" id="fig|272943.9.peg.1547"/>
<dbReference type="eggNOG" id="COG1206">
    <property type="taxonomic scope" value="Bacteria"/>
</dbReference>
<dbReference type="OrthoDB" id="9803114at2"/>
<dbReference type="PhylomeDB" id="Q3J349"/>
<dbReference type="Proteomes" id="UP000002703">
    <property type="component" value="Chromosome 1"/>
</dbReference>
<dbReference type="GO" id="GO:0005829">
    <property type="term" value="C:cytosol"/>
    <property type="evidence" value="ECO:0007669"/>
    <property type="project" value="TreeGrafter"/>
</dbReference>
<dbReference type="GO" id="GO:0050660">
    <property type="term" value="F:flavin adenine dinucleotide binding"/>
    <property type="evidence" value="ECO:0007669"/>
    <property type="project" value="UniProtKB-UniRule"/>
</dbReference>
<dbReference type="GO" id="GO:0047151">
    <property type="term" value="F:tRNA (uracil(54)-C5)-methyltransferase activity, 5,10-methylenetetrahydrofolate-dependent"/>
    <property type="evidence" value="ECO:0007669"/>
    <property type="project" value="UniProtKB-UniRule"/>
</dbReference>
<dbReference type="GO" id="GO:0030488">
    <property type="term" value="P:tRNA methylation"/>
    <property type="evidence" value="ECO:0007669"/>
    <property type="project" value="TreeGrafter"/>
</dbReference>
<dbReference type="GO" id="GO:0002098">
    <property type="term" value="P:tRNA wobble uridine modification"/>
    <property type="evidence" value="ECO:0007669"/>
    <property type="project" value="TreeGrafter"/>
</dbReference>
<dbReference type="Gene3D" id="3.50.50.60">
    <property type="entry name" value="FAD/NAD(P)-binding domain"/>
    <property type="match status" value="2"/>
</dbReference>
<dbReference type="HAMAP" id="MF_01037">
    <property type="entry name" value="TrmFO"/>
    <property type="match status" value="1"/>
</dbReference>
<dbReference type="InterPro" id="IPR036188">
    <property type="entry name" value="FAD/NAD-bd_sf"/>
</dbReference>
<dbReference type="InterPro" id="IPR002218">
    <property type="entry name" value="MnmG-rel"/>
</dbReference>
<dbReference type="InterPro" id="IPR020595">
    <property type="entry name" value="MnmG-rel_CS"/>
</dbReference>
<dbReference type="InterPro" id="IPR040131">
    <property type="entry name" value="MnmG_N"/>
</dbReference>
<dbReference type="InterPro" id="IPR004417">
    <property type="entry name" value="TrmFO"/>
</dbReference>
<dbReference type="NCBIfam" id="TIGR00137">
    <property type="entry name" value="gid_trmFO"/>
    <property type="match status" value="1"/>
</dbReference>
<dbReference type="NCBIfam" id="NF003739">
    <property type="entry name" value="PRK05335.1"/>
    <property type="match status" value="1"/>
</dbReference>
<dbReference type="PANTHER" id="PTHR11806">
    <property type="entry name" value="GLUCOSE INHIBITED DIVISION PROTEIN A"/>
    <property type="match status" value="1"/>
</dbReference>
<dbReference type="PANTHER" id="PTHR11806:SF2">
    <property type="entry name" value="METHYLENETETRAHYDROFOLATE--TRNA-(URACIL-5-)-METHYLTRANSFERASE TRMFO"/>
    <property type="match status" value="1"/>
</dbReference>
<dbReference type="Pfam" id="PF01134">
    <property type="entry name" value="GIDA"/>
    <property type="match status" value="1"/>
</dbReference>
<dbReference type="SUPFAM" id="SSF51905">
    <property type="entry name" value="FAD/NAD(P)-binding domain"/>
    <property type="match status" value="1"/>
</dbReference>
<dbReference type="PROSITE" id="PS01281">
    <property type="entry name" value="GIDA_2"/>
    <property type="match status" value="1"/>
</dbReference>